<accession>Q2NUT9</accession>
<evidence type="ECO:0000255" key="1">
    <source>
        <dbReference type="HAMAP-Rule" id="MF_01864"/>
    </source>
</evidence>
<evidence type="ECO:0000255" key="2">
    <source>
        <dbReference type="PROSITE-ProRule" id="PRU01266"/>
    </source>
</evidence>
<gene>
    <name evidence="1" type="primary">miaB</name>
    <name type="ordered locus">SG0811</name>
</gene>
<organism>
    <name type="scientific">Sodalis glossinidius (strain morsitans)</name>
    <dbReference type="NCBI Taxonomy" id="343509"/>
    <lineage>
        <taxon>Bacteria</taxon>
        <taxon>Pseudomonadati</taxon>
        <taxon>Pseudomonadota</taxon>
        <taxon>Gammaproteobacteria</taxon>
        <taxon>Enterobacterales</taxon>
        <taxon>Bruguierivoracaceae</taxon>
        <taxon>Sodalis</taxon>
    </lineage>
</organism>
<keyword id="KW-0004">4Fe-4S</keyword>
<keyword id="KW-0963">Cytoplasm</keyword>
<keyword id="KW-0408">Iron</keyword>
<keyword id="KW-0411">Iron-sulfur</keyword>
<keyword id="KW-0479">Metal-binding</keyword>
<keyword id="KW-0949">S-adenosyl-L-methionine</keyword>
<keyword id="KW-0808">Transferase</keyword>
<keyword id="KW-0819">tRNA processing</keyword>
<comment type="function">
    <text evidence="1">Catalyzes the methylthiolation of N6-(dimethylallyl)adenosine (i(6)A), leading to the formation of 2-methylthio-N6-(dimethylallyl)adenosine (ms(2)i(6)A) at position 37 in tRNAs that read codons beginning with uridine.</text>
</comment>
<comment type="catalytic activity">
    <reaction evidence="1">
        <text>N(6)-dimethylallyladenosine(37) in tRNA + (sulfur carrier)-SH + AH2 + 2 S-adenosyl-L-methionine = 2-methylsulfanyl-N(6)-dimethylallyladenosine(37) in tRNA + (sulfur carrier)-H + 5'-deoxyadenosine + L-methionine + A + S-adenosyl-L-homocysteine + 2 H(+)</text>
        <dbReference type="Rhea" id="RHEA:37067"/>
        <dbReference type="Rhea" id="RHEA-COMP:10375"/>
        <dbReference type="Rhea" id="RHEA-COMP:10376"/>
        <dbReference type="Rhea" id="RHEA-COMP:14737"/>
        <dbReference type="Rhea" id="RHEA-COMP:14739"/>
        <dbReference type="ChEBI" id="CHEBI:13193"/>
        <dbReference type="ChEBI" id="CHEBI:15378"/>
        <dbReference type="ChEBI" id="CHEBI:17319"/>
        <dbReference type="ChEBI" id="CHEBI:17499"/>
        <dbReference type="ChEBI" id="CHEBI:29917"/>
        <dbReference type="ChEBI" id="CHEBI:57844"/>
        <dbReference type="ChEBI" id="CHEBI:57856"/>
        <dbReference type="ChEBI" id="CHEBI:59789"/>
        <dbReference type="ChEBI" id="CHEBI:64428"/>
        <dbReference type="ChEBI" id="CHEBI:74415"/>
        <dbReference type="ChEBI" id="CHEBI:74417"/>
        <dbReference type="EC" id="2.8.4.3"/>
    </reaction>
</comment>
<comment type="cofactor">
    <cofactor evidence="1">
        <name>[4Fe-4S] cluster</name>
        <dbReference type="ChEBI" id="CHEBI:49883"/>
    </cofactor>
    <text evidence="1">Binds 2 [4Fe-4S] clusters. One cluster is coordinated with 3 cysteines and an exchangeable S-adenosyl-L-methionine.</text>
</comment>
<comment type="subunit">
    <text evidence="1">Monomer.</text>
</comment>
<comment type="subcellular location">
    <subcellularLocation>
        <location evidence="1">Cytoplasm</location>
    </subcellularLocation>
</comment>
<comment type="similarity">
    <text evidence="1">Belongs to the methylthiotransferase family. MiaB subfamily.</text>
</comment>
<dbReference type="EC" id="2.8.4.3" evidence="1"/>
<dbReference type="EMBL" id="AP008232">
    <property type="protein sequence ID" value="BAE74086.1"/>
    <property type="molecule type" value="Genomic_DNA"/>
</dbReference>
<dbReference type="RefSeq" id="WP_011410674.1">
    <property type="nucleotide sequence ID" value="NC_007712.1"/>
</dbReference>
<dbReference type="SMR" id="Q2NUT9"/>
<dbReference type="STRING" id="343509.SG0811"/>
<dbReference type="KEGG" id="sgl:SG0811"/>
<dbReference type="eggNOG" id="COG0621">
    <property type="taxonomic scope" value="Bacteria"/>
</dbReference>
<dbReference type="HOGENOM" id="CLU_018697_2_0_6"/>
<dbReference type="OrthoDB" id="9805215at2"/>
<dbReference type="BioCyc" id="SGLO343509:SGP1_RS07120-MONOMER"/>
<dbReference type="Proteomes" id="UP000001932">
    <property type="component" value="Chromosome"/>
</dbReference>
<dbReference type="GO" id="GO:0005829">
    <property type="term" value="C:cytosol"/>
    <property type="evidence" value="ECO:0007669"/>
    <property type="project" value="TreeGrafter"/>
</dbReference>
<dbReference type="GO" id="GO:0051539">
    <property type="term" value="F:4 iron, 4 sulfur cluster binding"/>
    <property type="evidence" value="ECO:0007669"/>
    <property type="project" value="UniProtKB-UniRule"/>
</dbReference>
<dbReference type="GO" id="GO:0046872">
    <property type="term" value="F:metal ion binding"/>
    <property type="evidence" value="ECO:0007669"/>
    <property type="project" value="UniProtKB-KW"/>
</dbReference>
<dbReference type="GO" id="GO:0035597">
    <property type="term" value="F:N6-isopentenyladenosine methylthiotransferase activity"/>
    <property type="evidence" value="ECO:0007669"/>
    <property type="project" value="TreeGrafter"/>
</dbReference>
<dbReference type="CDD" id="cd01335">
    <property type="entry name" value="Radical_SAM"/>
    <property type="match status" value="1"/>
</dbReference>
<dbReference type="FunFam" id="3.40.50.12160:FF:000001">
    <property type="entry name" value="tRNA-2-methylthio-N(6)-dimethylallyladenosine synthase"/>
    <property type="match status" value="1"/>
</dbReference>
<dbReference type="FunFam" id="3.80.30.20:FF:000001">
    <property type="entry name" value="tRNA-2-methylthio-N(6)-dimethylallyladenosine synthase 2"/>
    <property type="match status" value="1"/>
</dbReference>
<dbReference type="Gene3D" id="3.40.50.12160">
    <property type="entry name" value="Methylthiotransferase, N-terminal domain"/>
    <property type="match status" value="1"/>
</dbReference>
<dbReference type="Gene3D" id="3.80.30.20">
    <property type="entry name" value="tm_1862 like domain"/>
    <property type="match status" value="1"/>
</dbReference>
<dbReference type="HAMAP" id="MF_01864">
    <property type="entry name" value="tRNA_metthiotr_MiaB"/>
    <property type="match status" value="1"/>
</dbReference>
<dbReference type="InterPro" id="IPR006638">
    <property type="entry name" value="Elp3/MiaA/NifB-like_rSAM"/>
</dbReference>
<dbReference type="InterPro" id="IPR005839">
    <property type="entry name" value="Methylthiotransferase"/>
</dbReference>
<dbReference type="InterPro" id="IPR020612">
    <property type="entry name" value="Methylthiotransferase_CS"/>
</dbReference>
<dbReference type="InterPro" id="IPR013848">
    <property type="entry name" value="Methylthiotransferase_N"/>
</dbReference>
<dbReference type="InterPro" id="IPR038135">
    <property type="entry name" value="Methylthiotransferase_N_sf"/>
</dbReference>
<dbReference type="InterPro" id="IPR006463">
    <property type="entry name" value="MiaB_methiolase"/>
</dbReference>
<dbReference type="InterPro" id="IPR007197">
    <property type="entry name" value="rSAM"/>
</dbReference>
<dbReference type="InterPro" id="IPR023404">
    <property type="entry name" value="rSAM_horseshoe"/>
</dbReference>
<dbReference type="InterPro" id="IPR002792">
    <property type="entry name" value="TRAM_dom"/>
</dbReference>
<dbReference type="NCBIfam" id="TIGR01574">
    <property type="entry name" value="miaB-methiolase"/>
    <property type="match status" value="1"/>
</dbReference>
<dbReference type="NCBIfam" id="TIGR00089">
    <property type="entry name" value="MiaB/RimO family radical SAM methylthiotransferase"/>
    <property type="match status" value="1"/>
</dbReference>
<dbReference type="PANTHER" id="PTHR43020">
    <property type="entry name" value="CDK5 REGULATORY SUBUNIT-ASSOCIATED PROTEIN 1"/>
    <property type="match status" value="1"/>
</dbReference>
<dbReference type="PANTHER" id="PTHR43020:SF2">
    <property type="entry name" value="MITOCHONDRIAL TRNA METHYLTHIOTRANSFERASE CDK5RAP1"/>
    <property type="match status" value="1"/>
</dbReference>
<dbReference type="Pfam" id="PF04055">
    <property type="entry name" value="Radical_SAM"/>
    <property type="match status" value="1"/>
</dbReference>
<dbReference type="Pfam" id="PF01938">
    <property type="entry name" value="TRAM"/>
    <property type="match status" value="1"/>
</dbReference>
<dbReference type="Pfam" id="PF00919">
    <property type="entry name" value="UPF0004"/>
    <property type="match status" value="1"/>
</dbReference>
<dbReference type="SFLD" id="SFLDF00273">
    <property type="entry name" value="(dimethylallyl)adenosine_tRNA"/>
    <property type="match status" value="1"/>
</dbReference>
<dbReference type="SFLD" id="SFLDG01082">
    <property type="entry name" value="B12-binding_domain_containing"/>
    <property type="match status" value="1"/>
</dbReference>
<dbReference type="SFLD" id="SFLDS00029">
    <property type="entry name" value="Radical_SAM"/>
    <property type="match status" value="1"/>
</dbReference>
<dbReference type="SMART" id="SM00729">
    <property type="entry name" value="Elp3"/>
    <property type="match status" value="1"/>
</dbReference>
<dbReference type="SUPFAM" id="SSF102114">
    <property type="entry name" value="Radical SAM enzymes"/>
    <property type="match status" value="1"/>
</dbReference>
<dbReference type="PROSITE" id="PS51449">
    <property type="entry name" value="MTTASE_N"/>
    <property type="match status" value="1"/>
</dbReference>
<dbReference type="PROSITE" id="PS01278">
    <property type="entry name" value="MTTASE_RADICAL"/>
    <property type="match status" value="1"/>
</dbReference>
<dbReference type="PROSITE" id="PS51918">
    <property type="entry name" value="RADICAL_SAM"/>
    <property type="match status" value="1"/>
</dbReference>
<dbReference type="PROSITE" id="PS50926">
    <property type="entry name" value="TRAM"/>
    <property type="match status" value="1"/>
</dbReference>
<sequence>MTKKLHIKTWGCQMNEYDSSKMADLLDSTHGYQLTDNPEEADVLLLNTCSIREKAQEKVFHQLGRWHMLKEARPELIIGVGGCVASQEGAHIRERANYVDIIFGPQTLHRLPEMINHVNGTRSPVVDISFPEIEKFDRLPEPRAEGPTAFVSIMEGCNKYCSFCVVPYTRGEEVSRPCDDILFEIAQLADQGVREVNLLGQNVNAYRGASYDGGICTFAELLRLVAAIDGIDRIRYITSHPIEFTDDIIDVYRDTPELVSFVHLPVQSGSDRILTMMKRAHTALEYKSIIRRLRKARPDIQISSDFIIGFPGETQQDFEQTMQLIADVNFDMSFSFIYSARPGTPAADMVDNVSEEEKKQRLHILQERITQQAMQYSRRMKGKVQRILVEGTSRKNVMELSGRTENNRVVNFEGAPSMIGKFVDVEIVDVYPNSLRGVLLRTEDQMTLRSHESTASVIARTRKENELGVGMYQP</sequence>
<name>MIAB_SODGM</name>
<protein>
    <recommendedName>
        <fullName evidence="1">tRNA-2-methylthio-N(6)-dimethylallyladenosine synthase</fullName>
        <ecNumber evidence="1">2.8.4.3</ecNumber>
    </recommendedName>
    <alternativeName>
        <fullName evidence="1">(Dimethylallyl)adenosine tRNA methylthiotransferase MiaB</fullName>
    </alternativeName>
    <alternativeName>
        <fullName evidence="1">tRNA-i(6)A37 methylthiotransferase</fullName>
    </alternativeName>
</protein>
<proteinExistence type="inferred from homology"/>
<feature type="chain" id="PRO_0000374559" description="tRNA-2-methylthio-N(6)-dimethylallyladenosine synthase">
    <location>
        <begin position="1"/>
        <end position="474"/>
    </location>
</feature>
<feature type="domain" description="MTTase N-terminal" evidence="1">
    <location>
        <begin position="3"/>
        <end position="120"/>
    </location>
</feature>
<feature type="domain" description="Radical SAM core" evidence="2">
    <location>
        <begin position="143"/>
        <end position="375"/>
    </location>
</feature>
<feature type="domain" description="TRAM" evidence="1">
    <location>
        <begin position="378"/>
        <end position="441"/>
    </location>
</feature>
<feature type="binding site" evidence="1">
    <location>
        <position position="12"/>
    </location>
    <ligand>
        <name>[4Fe-4S] cluster</name>
        <dbReference type="ChEBI" id="CHEBI:49883"/>
        <label>1</label>
    </ligand>
</feature>
<feature type="binding site" evidence="1">
    <location>
        <position position="49"/>
    </location>
    <ligand>
        <name>[4Fe-4S] cluster</name>
        <dbReference type="ChEBI" id="CHEBI:49883"/>
        <label>1</label>
    </ligand>
</feature>
<feature type="binding site" evidence="1">
    <location>
        <position position="83"/>
    </location>
    <ligand>
        <name>[4Fe-4S] cluster</name>
        <dbReference type="ChEBI" id="CHEBI:49883"/>
        <label>1</label>
    </ligand>
</feature>
<feature type="binding site" evidence="1">
    <location>
        <position position="157"/>
    </location>
    <ligand>
        <name>[4Fe-4S] cluster</name>
        <dbReference type="ChEBI" id="CHEBI:49883"/>
        <label>2</label>
        <note>4Fe-4S-S-AdoMet</note>
    </ligand>
</feature>
<feature type="binding site" evidence="1">
    <location>
        <position position="161"/>
    </location>
    <ligand>
        <name>[4Fe-4S] cluster</name>
        <dbReference type="ChEBI" id="CHEBI:49883"/>
        <label>2</label>
        <note>4Fe-4S-S-AdoMet</note>
    </ligand>
</feature>
<feature type="binding site" evidence="1">
    <location>
        <position position="164"/>
    </location>
    <ligand>
        <name>[4Fe-4S] cluster</name>
        <dbReference type="ChEBI" id="CHEBI:49883"/>
        <label>2</label>
        <note>4Fe-4S-S-AdoMet</note>
    </ligand>
</feature>
<reference key="1">
    <citation type="journal article" date="2006" name="Genome Res.">
        <title>Massive genome erosion and functional adaptations provide insights into the symbiotic lifestyle of Sodalis glossinidius in the tsetse host.</title>
        <authorList>
            <person name="Toh H."/>
            <person name="Weiss B.L."/>
            <person name="Perkin S.A.H."/>
            <person name="Yamashita A."/>
            <person name="Oshima K."/>
            <person name="Hattori M."/>
            <person name="Aksoy S."/>
        </authorList>
    </citation>
    <scope>NUCLEOTIDE SEQUENCE [LARGE SCALE GENOMIC DNA]</scope>
    <source>
        <strain>morsitans</strain>
    </source>
</reference>